<accession>A8W3L6</accession>
<feature type="chain" id="PRO_0000344755" description="Large ribosomal subunit protein bL36c">
    <location>
        <begin position="1"/>
        <end position="37"/>
    </location>
</feature>
<evidence type="ECO:0000255" key="1">
    <source>
        <dbReference type="HAMAP-Rule" id="MF_00251"/>
    </source>
</evidence>
<evidence type="ECO:0000305" key="2"/>
<keyword id="KW-0934">Plastid</keyword>
<keyword id="KW-0687">Ribonucleoprotein</keyword>
<keyword id="KW-0689">Ribosomal protein</keyword>
<protein>
    <recommendedName>
        <fullName evidence="2">Large ribosomal subunit protein bL36c</fullName>
    </recommendedName>
    <alternativeName>
        <fullName>Plastid 50S ribosomal protein L36</fullName>
    </alternativeName>
</protein>
<comment type="subcellular location">
    <subcellularLocation>
        <location>Plastid</location>
    </subcellularLocation>
</comment>
<comment type="similarity">
    <text evidence="1">Belongs to the bacterial ribosomal protein bL36 family.</text>
</comment>
<organism>
    <name type="scientific">Cuscuta obtusiflora</name>
    <name type="common">Peruvian dodder</name>
    <dbReference type="NCBI Taxonomy" id="437280"/>
    <lineage>
        <taxon>Eukaryota</taxon>
        <taxon>Viridiplantae</taxon>
        <taxon>Streptophyta</taxon>
        <taxon>Embryophyta</taxon>
        <taxon>Tracheophyta</taxon>
        <taxon>Spermatophyta</taxon>
        <taxon>Magnoliopsida</taxon>
        <taxon>eudicotyledons</taxon>
        <taxon>Gunneridae</taxon>
        <taxon>Pentapetalae</taxon>
        <taxon>asterids</taxon>
        <taxon>lamiids</taxon>
        <taxon>Solanales</taxon>
        <taxon>Convolvulaceae</taxon>
        <taxon>Cuscuteae</taxon>
        <taxon>Cuscuta</taxon>
        <taxon>Cuscuta subgen. Grammica</taxon>
        <taxon>Cuscuta sect. Cleistogrammica</taxon>
    </lineage>
</organism>
<gene>
    <name evidence="1" type="primary">rpl36</name>
</gene>
<reference key="1">
    <citation type="journal article" date="2007" name="BMC Plant Biol.">
        <title>Complete plastid genome sequences suggest strong selection for retention of photosynthetic genes in the parasitic plant genus Cuscuta.</title>
        <authorList>
            <person name="McNeal J.R."/>
            <person name="Kuehl J.V."/>
            <person name="Boore J.L."/>
            <person name="dePamphilis C.W."/>
        </authorList>
    </citation>
    <scope>NUCLEOTIDE SEQUENCE [LARGE SCALE GENOMIC DNA]</scope>
</reference>
<name>RK36_CUSOB</name>
<sequence>MKKRASVRKICDKCRLIRRGGRILVICSNPRHKQGQG</sequence>
<geneLocation type="plastid"/>
<dbReference type="EMBL" id="EU189133">
    <property type="protein sequence ID" value="ABW20591.1"/>
    <property type="molecule type" value="Genomic_DNA"/>
</dbReference>
<dbReference type="RefSeq" id="YP_001531246.1">
    <property type="nucleotide sequence ID" value="NC_009949.1"/>
</dbReference>
<dbReference type="SMR" id="A8W3L6"/>
<dbReference type="GeneID" id="5714843"/>
<dbReference type="GO" id="GO:0009536">
    <property type="term" value="C:plastid"/>
    <property type="evidence" value="ECO:0007669"/>
    <property type="project" value="UniProtKB-SubCell"/>
</dbReference>
<dbReference type="GO" id="GO:1990904">
    <property type="term" value="C:ribonucleoprotein complex"/>
    <property type="evidence" value="ECO:0007669"/>
    <property type="project" value="UniProtKB-KW"/>
</dbReference>
<dbReference type="GO" id="GO:0005840">
    <property type="term" value="C:ribosome"/>
    <property type="evidence" value="ECO:0007669"/>
    <property type="project" value="UniProtKB-KW"/>
</dbReference>
<dbReference type="GO" id="GO:0003735">
    <property type="term" value="F:structural constituent of ribosome"/>
    <property type="evidence" value="ECO:0007669"/>
    <property type="project" value="InterPro"/>
</dbReference>
<dbReference type="GO" id="GO:0006412">
    <property type="term" value="P:translation"/>
    <property type="evidence" value="ECO:0007669"/>
    <property type="project" value="InterPro"/>
</dbReference>
<dbReference type="HAMAP" id="MF_00251">
    <property type="entry name" value="Ribosomal_bL36"/>
    <property type="match status" value="1"/>
</dbReference>
<dbReference type="InterPro" id="IPR000473">
    <property type="entry name" value="Ribosomal_bL36"/>
</dbReference>
<dbReference type="InterPro" id="IPR035977">
    <property type="entry name" value="Ribosomal_bL36_sp"/>
</dbReference>
<dbReference type="NCBIfam" id="TIGR01022">
    <property type="entry name" value="rpmJ_bact"/>
    <property type="match status" value="1"/>
</dbReference>
<dbReference type="PANTHER" id="PTHR42888">
    <property type="entry name" value="50S RIBOSOMAL PROTEIN L36, CHLOROPLASTIC"/>
    <property type="match status" value="1"/>
</dbReference>
<dbReference type="PANTHER" id="PTHR42888:SF1">
    <property type="entry name" value="LARGE RIBOSOMAL SUBUNIT PROTEIN BL36C"/>
    <property type="match status" value="1"/>
</dbReference>
<dbReference type="Pfam" id="PF00444">
    <property type="entry name" value="Ribosomal_L36"/>
    <property type="match status" value="1"/>
</dbReference>
<dbReference type="SUPFAM" id="SSF57840">
    <property type="entry name" value="Ribosomal protein L36"/>
    <property type="match status" value="1"/>
</dbReference>
<dbReference type="PROSITE" id="PS00828">
    <property type="entry name" value="RIBOSOMAL_L36"/>
    <property type="match status" value="1"/>
</dbReference>
<proteinExistence type="inferred from homology"/>